<feature type="chain" id="PRO_0000127474" description="Transcription factor EB">
    <location>
        <begin position="1"/>
        <end position="475"/>
    </location>
</feature>
<feature type="domain" description="bHLH" evidence="3">
    <location>
        <begin position="234"/>
        <end position="287"/>
    </location>
</feature>
<feature type="region of interest" description="Interaction with ACSS2" evidence="1">
    <location>
        <begin position="1"/>
        <end position="166"/>
    </location>
</feature>
<feature type="region of interest" description="Disordered" evidence="4">
    <location>
        <begin position="1"/>
        <end position="52"/>
    </location>
</feature>
<feature type="region of interest" description="Strong transcription activation domain" evidence="2">
    <location>
        <begin position="155"/>
        <end position="164"/>
    </location>
</feature>
<feature type="region of interest" description="Leucine-zipper">
    <location>
        <begin position="297"/>
        <end position="318"/>
    </location>
</feature>
<feature type="region of interest" description="Disordered" evidence="4">
    <location>
        <begin position="351"/>
        <end position="429"/>
    </location>
</feature>
<feature type="region of interest" description="Disordered" evidence="4">
    <location>
        <begin position="445"/>
        <end position="475"/>
    </location>
</feature>
<feature type="short sequence motif" description="Nuclear export signal" evidence="1">
    <location>
        <begin position="135"/>
        <end position="152"/>
    </location>
</feature>
<feature type="short sequence motif" description="Nuclear localization signal" evidence="1">
    <location>
        <begin position="244"/>
        <end position="247"/>
    </location>
</feature>
<feature type="compositionally biased region" description="Low complexity" evidence="4">
    <location>
        <begin position="26"/>
        <end position="43"/>
    </location>
</feature>
<feature type="compositionally biased region" description="Low complexity" evidence="4">
    <location>
        <begin position="380"/>
        <end position="389"/>
    </location>
</feature>
<feature type="compositionally biased region" description="Low complexity" evidence="4">
    <location>
        <begin position="445"/>
        <end position="468"/>
    </location>
</feature>
<feature type="modified residue" description="Phosphoserine" evidence="17">
    <location>
        <position position="108"/>
    </location>
</feature>
<feature type="modified residue" description="Phosphoserine" evidence="17">
    <location>
        <position position="113"/>
    </location>
</feature>
<feature type="modified residue" description="Phosphoserine" evidence="17">
    <location>
        <position position="121"/>
    </location>
</feature>
<feature type="modified residue" description="Phosphoserine" evidence="17">
    <location>
        <position position="137"/>
    </location>
</feature>
<feature type="modified residue" description="Phosphoserine; by MTOR" evidence="17">
    <location>
        <position position="141"/>
    </location>
</feature>
<feature type="modified residue" description="Phosphothreonine" evidence="1">
    <location>
        <position position="182"/>
    </location>
</feature>
<feature type="modified residue" description="Phosphoserine; by MTOR" evidence="1">
    <location>
        <position position="210"/>
    </location>
</feature>
<feature type="modified residue" description="S-(2,3-dicarboxypropyl)cysteine" evidence="12">
    <location>
        <position position="211"/>
    </location>
</feature>
<feature type="modified residue" description="Phosphoserine" evidence="1">
    <location>
        <position position="331"/>
    </location>
</feature>
<feature type="modified residue" description="Phosphoserine" evidence="1">
    <location>
        <position position="422"/>
    </location>
</feature>
<feature type="modified residue" description="Phosphoserine" evidence="1">
    <location>
        <position position="440"/>
    </location>
</feature>
<feature type="modified residue" description="Phosphoserine" evidence="17">
    <location>
        <position position="465"/>
    </location>
</feature>
<feature type="modified residue" description="Phosphoserine" evidence="17">
    <location>
        <position position="466"/>
    </location>
</feature>
<feature type="modified residue" description="Phosphoserine" evidence="17">
    <location>
        <position position="468"/>
    </location>
</feature>
<feature type="mutagenesis site" description="Abolished alkylation in knockin mice. Mice display elevated susceptibility to S.typhimurium infection." evidence="12">
    <original>C</original>
    <variation>S</variation>
    <location>
        <position position="211"/>
    </location>
</feature>
<protein>
    <recommendedName>
        <fullName evidence="14">Transcription factor EB</fullName>
    </recommendedName>
</protein>
<evidence type="ECO:0000250" key="1">
    <source>
        <dbReference type="UniProtKB" id="P19484"/>
    </source>
</evidence>
<evidence type="ECO:0000255" key="2"/>
<evidence type="ECO:0000255" key="3">
    <source>
        <dbReference type="PROSITE-ProRule" id="PRU00981"/>
    </source>
</evidence>
<evidence type="ECO:0000256" key="4">
    <source>
        <dbReference type="SAM" id="MobiDB-lite"/>
    </source>
</evidence>
<evidence type="ECO:0000269" key="5">
    <source>
    </source>
</evidence>
<evidence type="ECO:0000269" key="6">
    <source>
    </source>
</evidence>
<evidence type="ECO:0000269" key="7">
    <source>
    </source>
</evidence>
<evidence type="ECO:0000269" key="8">
    <source>
    </source>
</evidence>
<evidence type="ECO:0000269" key="9">
    <source>
    </source>
</evidence>
<evidence type="ECO:0000269" key="10">
    <source>
    </source>
</evidence>
<evidence type="ECO:0000269" key="11">
    <source>
    </source>
</evidence>
<evidence type="ECO:0000269" key="12">
    <source>
    </source>
</evidence>
<evidence type="ECO:0000269" key="13">
    <source>
    </source>
</evidence>
<evidence type="ECO:0000303" key="14">
    <source>
    </source>
</evidence>
<evidence type="ECO:0000305" key="15"/>
<evidence type="ECO:0000312" key="16">
    <source>
        <dbReference type="MGI" id="MGI:103270"/>
    </source>
</evidence>
<evidence type="ECO:0007744" key="17">
    <source>
    </source>
</evidence>
<dbReference type="EMBL" id="AF079095">
    <property type="protein sequence ID" value="AAD20979.1"/>
    <property type="status" value="ALT_INIT"/>
    <property type="molecule type" value="mRNA"/>
</dbReference>
<dbReference type="CCDS" id="CCDS28856.1"/>
<dbReference type="CCDS" id="CCDS50133.1"/>
<dbReference type="RefSeq" id="NP_001155194.1">
    <property type="nucleotide sequence ID" value="NM_001161722.2"/>
</dbReference>
<dbReference type="RefSeq" id="NP_001155195.1">
    <property type="nucleotide sequence ID" value="NM_001161723.2"/>
</dbReference>
<dbReference type="RefSeq" id="NP_001419107.1">
    <property type="nucleotide sequence ID" value="NM_001432178.1"/>
</dbReference>
<dbReference type="RefSeq" id="NP_001419108.1">
    <property type="nucleotide sequence ID" value="NM_001432179.1"/>
</dbReference>
<dbReference type="RefSeq" id="NP_001419109.1">
    <property type="nucleotide sequence ID" value="NM_001432180.1"/>
</dbReference>
<dbReference type="RefSeq" id="NP_001419110.1">
    <property type="nucleotide sequence ID" value="NM_001432181.1"/>
</dbReference>
<dbReference type="RefSeq" id="NP_035679.3">
    <property type="nucleotide sequence ID" value="NM_011549.3"/>
</dbReference>
<dbReference type="RefSeq" id="XP_006524066.2">
    <property type="nucleotide sequence ID" value="XM_006524003.4"/>
</dbReference>
<dbReference type="RefSeq" id="XP_006524069.1">
    <property type="nucleotide sequence ID" value="XM_006524006.3"/>
</dbReference>
<dbReference type="RefSeq" id="XP_006524070.1">
    <property type="nucleotide sequence ID" value="XM_006524007.3"/>
</dbReference>
<dbReference type="SMR" id="Q9R210"/>
<dbReference type="BioGRID" id="204016">
    <property type="interactions" value="16"/>
</dbReference>
<dbReference type="FunCoup" id="Q9R210">
    <property type="interactions" value="787"/>
</dbReference>
<dbReference type="IntAct" id="Q9R210">
    <property type="interactions" value="1"/>
</dbReference>
<dbReference type="STRING" id="10090.ENSMUSP00000024786"/>
<dbReference type="GlyGen" id="Q9R210">
    <property type="glycosylation" value="1 site"/>
</dbReference>
<dbReference type="iPTMnet" id="Q9R210"/>
<dbReference type="PhosphoSitePlus" id="Q9R210"/>
<dbReference type="jPOST" id="Q9R210"/>
<dbReference type="PaxDb" id="10090-ENSMUSP00000024786"/>
<dbReference type="ProteomicsDB" id="258862"/>
<dbReference type="Pumba" id="Q9R210"/>
<dbReference type="Antibodypedia" id="15889">
    <property type="antibodies" value="614 antibodies from 43 providers"/>
</dbReference>
<dbReference type="DNASU" id="21425"/>
<dbReference type="Ensembl" id="ENSMUST00000086932.10">
    <property type="protein sequence ID" value="ENSMUSP00000084151.4"/>
    <property type="gene ID" value="ENSMUSG00000023990.19"/>
</dbReference>
<dbReference type="Ensembl" id="ENSMUST00000113288.8">
    <property type="protein sequence ID" value="ENSMUSP00000108913.2"/>
    <property type="gene ID" value="ENSMUSG00000023990.19"/>
</dbReference>
<dbReference type="GeneID" id="21425"/>
<dbReference type="KEGG" id="mmu:21425"/>
<dbReference type="UCSC" id="uc008cwc.2">
    <property type="organism name" value="mouse"/>
</dbReference>
<dbReference type="AGR" id="MGI:103270"/>
<dbReference type="CTD" id="7942"/>
<dbReference type="MGI" id="MGI:103270">
    <property type="gene designation" value="Tfeb"/>
</dbReference>
<dbReference type="VEuPathDB" id="HostDB:ENSMUSG00000023990"/>
<dbReference type="eggNOG" id="KOG1318">
    <property type="taxonomic scope" value="Eukaryota"/>
</dbReference>
<dbReference type="GeneTree" id="ENSGT00940000159691"/>
<dbReference type="HOGENOM" id="CLU_031638_3_1_1"/>
<dbReference type="InParanoid" id="Q9R210"/>
<dbReference type="OrthoDB" id="6242697at2759"/>
<dbReference type="PhylomeDB" id="Q9R210"/>
<dbReference type="BioGRID-ORCS" id="21425">
    <property type="hits" value="6 hits in 79 CRISPR screens"/>
</dbReference>
<dbReference type="ChiTaRS" id="Tfeb">
    <property type="organism name" value="mouse"/>
</dbReference>
<dbReference type="PRO" id="PR:Q9R210"/>
<dbReference type="Proteomes" id="UP000000589">
    <property type="component" value="Chromosome 17"/>
</dbReference>
<dbReference type="RNAct" id="Q9R210">
    <property type="molecule type" value="protein"/>
</dbReference>
<dbReference type="Bgee" id="ENSMUSG00000023990">
    <property type="expression patterns" value="Expressed in hindlimb stylopod muscle and 188 other cell types or tissues"/>
</dbReference>
<dbReference type="ExpressionAtlas" id="Q9R210">
    <property type="expression patterns" value="baseline and differential"/>
</dbReference>
<dbReference type="GO" id="GO:0005737">
    <property type="term" value="C:cytoplasm"/>
    <property type="evidence" value="ECO:0000314"/>
    <property type="project" value="UniProtKB"/>
</dbReference>
<dbReference type="GO" id="GO:0005829">
    <property type="term" value="C:cytosol"/>
    <property type="evidence" value="ECO:0000250"/>
    <property type="project" value="UniProtKB"/>
</dbReference>
<dbReference type="GO" id="GO:0005765">
    <property type="term" value="C:lysosomal membrane"/>
    <property type="evidence" value="ECO:0000250"/>
    <property type="project" value="UniProtKB"/>
</dbReference>
<dbReference type="GO" id="GO:0005654">
    <property type="term" value="C:nucleoplasm"/>
    <property type="evidence" value="ECO:0000304"/>
    <property type="project" value="Reactome"/>
</dbReference>
<dbReference type="GO" id="GO:0005634">
    <property type="term" value="C:nucleus"/>
    <property type="evidence" value="ECO:0000314"/>
    <property type="project" value="UniProtKB"/>
</dbReference>
<dbReference type="GO" id="GO:0005667">
    <property type="term" value="C:transcription regulator complex"/>
    <property type="evidence" value="ECO:0000314"/>
    <property type="project" value="MGI"/>
</dbReference>
<dbReference type="GO" id="GO:0003677">
    <property type="term" value="F:DNA binding"/>
    <property type="evidence" value="ECO:0000314"/>
    <property type="project" value="MGI"/>
</dbReference>
<dbReference type="GO" id="GO:0001228">
    <property type="term" value="F:DNA-binding transcription activator activity, RNA polymerase II-specific"/>
    <property type="evidence" value="ECO:0000314"/>
    <property type="project" value="NTNU_SB"/>
</dbReference>
<dbReference type="GO" id="GO:0003700">
    <property type="term" value="F:DNA-binding transcription factor activity"/>
    <property type="evidence" value="ECO:0000314"/>
    <property type="project" value="UniProtKB"/>
</dbReference>
<dbReference type="GO" id="GO:0019899">
    <property type="term" value="F:enzyme binding"/>
    <property type="evidence" value="ECO:0007669"/>
    <property type="project" value="Ensembl"/>
</dbReference>
<dbReference type="GO" id="GO:0046982">
    <property type="term" value="F:protein heterodimerization activity"/>
    <property type="evidence" value="ECO:0000353"/>
    <property type="project" value="UniProtKB"/>
</dbReference>
<dbReference type="GO" id="GO:0000978">
    <property type="term" value="F:RNA polymerase II cis-regulatory region sequence-specific DNA binding"/>
    <property type="evidence" value="ECO:0000314"/>
    <property type="project" value="NTNU_SB"/>
</dbReference>
<dbReference type="GO" id="GO:0000976">
    <property type="term" value="F:transcription cis-regulatory region binding"/>
    <property type="evidence" value="ECO:0000314"/>
    <property type="project" value="UniProtKB"/>
</dbReference>
<dbReference type="GO" id="GO:0002250">
    <property type="term" value="P:adaptive immune response"/>
    <property type="evidence" value="ECO:0007669"/>
    <property type="project" value="UniProtKB-KW"/>
</dbReference>
<dbReference type="GO" id="GO:0140367">
    <property type="term" value="P:antibacterial innate immune response"/>
    <property type="evidence" value="ECO:0000250"/>
    <property type="project" value="UniProtKB"/>
</dbReference>
<dbReference type="GO" id="GO:0006914">
    <property type="term" value="P:autophagy"/>
    <property type="evidence" value="ECO:0007669"/>
    <property type="project" value="UniProtKB-KW"/>
</dbReference>
<dbReference type="GO" id="GO:0034198">
    <property type="term" value="P:cellular response to amino acid starvation"/>
    <property type="evidence" value="ECO:0000250"/>
    <property type="project" value="UniProtKB"/>
</dbReference>
<dbReference type="GO" id="GO:0009267">
    <property type="term" value="P:cellular response to starvation"/>
    <property type="evidence" value="ECO:0000250"/>
    <property type="project" value="UniProtKB"/>
</dbReference>
<dbReference type="GO" id="GO:0050829">
    <property type="term" value="P:defense response to Gram-negative bacterium"/>
    <property type="evidence" value="ECO:0000315"/>
    <property type="project" value="UniProtKB"/>
</dbReference>
<dbReference type="GO" id="GO:0001892">
    <property type="term" value="P:embryonic placenta development"/>
    <property type="evidence" value="ECO:0000315"/>
    <property type="project" value="UniProtKB"/>
</dbReference>
<dbReference type="GO" id="GO:0006959">
    <property type="term" value="P:humoral immune response"/>
    <property type="evidence" value="ECO:0000315"/>
    <property type="project" value="UniProtKB"/>
</dbReference>
<dbReference type="GO" id="GO:0032418">
    <property type="term" value="P:lysosome localization"/>
    <property type="evidence" value="ECO:0007669"/>
    <property type="project" value="Ensembl"/>
</dbReference>
<dbReference type="GO" id="GO:0007040">
    <property type="term" value="P:lysosome organization"/>
    <property type="evidence" value="ECO:0000315"/>
    <property type="project" value="MGI"/>
</dbReference>
<dbReference type="GO" id="GO:0010508">
    <property type="term" value="P:positive regulation of autophagy"/>
    <property type="evidence" value="ECO:0000250"/>
    <property type="project" value="UniProtKB"/>
</dbReference>
<dbReference type="GO" id="GO:0045893">
    <property type="term" value="P:positive regulation of DNA-templated transcription"/>
    <property type="evidence" value="ECO:0000314"/>
    <property type="project" value="UniProtKB"/>
</dbReference>
<dbReference type="GO" id="GO:0045944">
    <property type="term" value="P:positive regulation of transcription by RNA polymerase II"/>
    <property type="evidence" value="ECO:0000314"/>
    <property type="project" value="UniProtKB"/>
</dbReference>
<dbReference type="GO" id="GO:1905671">
    <property type="term" value="P:regulation of lysosome organization"/>
    <property type="evidence" value="ECO:0007669"/>
    <property type="project" value="Ensembl"/>
</dbReference>
<dbReference type="CDD" id="cd18927">
    <property type="entry name" value="bHLHzip_TFEB"/>
    <property type="match status" value="1"/>
</dbReference>
<dbReference type="FunFam" id="4.10.280.10:FF:000003">
    <property type="entry name" value="microphthalmia-associated transcription factor isoform X1"/>
    <property type="match status" value="1"/>
</dbReference>
<dbReference type="Gene3D" id="4.10.280.10">
    <property type="entry name" value="Helix-loop-helix DNA-binding domain"/>
    <property type="match status" value="1"/>
</dbReference>
<dbReference type="InterPro" id="IPR011598">
    <property type="entry name" value="bHLH_dom"/>
</dbReference>
<dbReference type="InterPro" id="IPR024098">
    <property type="entry name" value="bHLHzip_TFEB"/>
</dbReference>
<dbReference type="InterPro" id="IPR036638">
    <property type="entry name" value="HLH_DNA-bd_sf"/>
</dbReference>
<dbReference type="InterPro" id="IPR021802">
    <property type="entry name" value="MiT/TFE_C"/>
</dbReference>
<dbReference type="InterPro" id="IPR031867">
    <property type="entry name" value="MiT/TFE_N"/>
</dbReference>
<dbReference type="PANTHER" id="PTHR45776">
    <property type="entry name" value="MIP04163P"/>
    <property type="match status" value="1"/>
</dbReference>
<dbReference type="PANTHER" id="PTHR45776:SF5">
    <property type="entry name" value="TRANSCRIPTION FACTOR EB"/>
    <property type="match status" value="1"/>
</dbReference>
<dbReference type="Pfam" id="PF11851">
    <property type="entry name" value="DUF3371"/>
    <property type="match status" value="1"/>
</dbReference>
<dbReference type="Pfam" id="PF00010">
    <property type="entry name" value="HLH"/>
    <property type="match status" value="1"/>
</dbReference>
<dbReference type="Pfam" id="PF15951">
    <property type="entry name" value="MITF_TFEB_C_3_N"/>
    <property type="match status" value="1"/>
</dbReference>
<dbReference type="SMART" id="SM00353">
    <property type="entry name" value="HLH"/>
    <property type="match status" value="1"/>
</dbReference>
<dbReference type="SUPFAM" id="SSF47459">
    <property type="entry name" value="HLH, helix-loop-helix DNA-binding domain"/>
    <property type="match status" value="1"/>
</dbReference>
<dbReference type="PROSITE" id="PS50888">
    <property type="entry name" value="BHLH"/>
    <property type="match status" value="1"/>
</dbReference>
<sequence>MASRIGLRMQLMREQAQQEEQRERMQQQAVMHYMQQQQQQQQQLGGPPTPAINTPVHFQSPPPVPGEVLKVQSYLENPTSYHLQQSQHQKVREYLSETYGNKFAAHVSPAQGSPKPAPAASPGVRAGHVLSTSAGNSAPNSPMAMLHISSNPEKEFDDVIDNIMRLDSVLGYINPEMQMPNTLPLSSSHLNVYSGDPQVTASMVGVTSSSCPADLTQKRELTDAESRALAKERQKKDNHNLIERRRRFNINDRIKELGMLIPKANDLDVRWNKGTILKASVDYIRRMQKDLQKSRELENHSRRLEMTNKQLWLRIQELEMQARVHGLPTTSPSGVNMAELAQQVVKQELPSEDGPGEALMLGPEVPEPEQMPALPPQAPLPSAAQPQSPFHHLDFSHGLSFGGGGDEGPTGYPDTLGTEHGSPFPNLSKKDLDLMLLDDSLLPLASDPLFSTMSPEASKASSRRSSFSMEEGDVL</sequence>
<organism>
    <name type="scientific">Mus musculus</name>
    <name type="common">Mouse</name>
    <dbReference type="NCBI Taxonomy" id="10090"/>
    <lineage>
        <taxon>Eukaryota</taxon>
        <taxon>Metazoa</taxon>
        <taxon>Chordata</taxon>
        <taxon>Craniata</taxon>
        <taxon>Vertebrata</taxon>
        <taxon>Euteleostomi</taxon>
        <taxon>Mammalia</taxon>
        <taxon>Eutheria</taxon>
        <taxon>Euarchontoglires</taxon>
        <taxon>Glires</taxon>
        <taxon>Rodentia</taxon>
        <taxon>Myomorpha</taxon>
        <taxon>Muroidea</taxon>
        <taxon>Muridae</taxon>
        <taxon>Murinae</taxon>
        <taxon>Mus</taxon>
        <taxon>Mus</taxon>
    </lineage>
</organism>
<reference key="1">
    <citation type="journal article" date="1999" name="Genomics">
        <title>Cloning and characterization of the murine genes for bHLH-ZIP transcription factors TFEC and TFEB reveal a common gene organization for all MiT subfamily members.</title>
        <authorList>
            <person name="Rehli M."/>
            <person name="Den Elzen N."/>
            <person name="Cassady A.I."/>
            <person name="Ostrowski M.C."/>
            <person name="Hume D.A."/>
        </authorList>
    </citation>
    <scope>NUCLEOTIDE SEQUENCE [MRNA]</scope>
    <source>
        <strain>BALB/cJ</strain>
    </source>
</reference>
<reference key="2">
    <citation type="journal article" date="1998" name="Development">
        <title>The bHLH-Zip transcription factor Tfeb is essential for placental vascularization.</title>
        <authorList>
            <person name="Steingrimsson E."/>
            <person name="Tessarollo L."/>
            <person name="Reid S.W."/>
            <person name="Jenkins N.A."/>
            <person name="Copeland N.G."/>
        </authorList>
    </citation>
    <scope>FUNCTION</scope>
    <scope>DISRUPTION PHENOTYPE</scope>
    <scope>DEVELOPMENTAL STAGE</scope>
</reference>
<reference key="3">
    <citation type="journal article" date="2006" name="Nat. Immunol.">
        <title>Transcription factors TFE3 and TFEB are critical for CD40 ligand expression and thymus-dependent humoral immunity.</title>
        <authorList>
            <person name="Huan C."/>
            <person name="Kelly M.L."/>
            <person name="Steele R."/>
            <person name="Shapira I."/>
            <person name="Gottesman S.R.S."/>
            <person name="Roman C.A.J."/>
        </authorList>
    </citation>
    <scope>FUNCTION</scope>
    <scope>DNA-BINDING</scope>
    <scope>TISSUE SPECIFICITY</scope>
</reference>
<reference key="4">
    <citation type="journal article" date="2007" name="Proc. Natl. Acad. Sci. U.S.A.">
        <title>Large-scale phosphorylation analysis of mouse liver.</title>
        <authorList>
            <person name="Villen J."/>
            <person name="Beausoleil S.A."/>
            <person name="Gerber S.A."/>
            <person name="Gygi S.P."/>
        </authorList>
    </citation>
    <scope>IDENTIFICATION BY MASS SPECTROMETRY [LARGE SCALE ANALYSIS]</scope>
    <source>
        <tissue>Liver</tissue>
    </source>
</reference>
<reference key="5">
    <citation type="journal article" date="2009" name="Immunity">
        <title>The phagosomal proteome in interferon-gamma-activated macrophages.</title>
        <authorList>
            <person name="Trost M."/>
            <person name="English L."/>
            <person name="Lemieux S."/>
            <person name="Courcelles M."/>
            <person name="Desjardins M."/>
            <person name="Thibault P."/>
        </authorList>
    </citation>
    <scope>IDENTIFICATION BY MASS SPECTROMETRY [LARGE SCALE ANALYSIS]</scope>
</reference>
<reference key="6">
    <citation type="journal article" date="2010" name="Cell">
        <title>A tissue-specific atlas of mouse protein phosphorylation and expression.</title>
        <authorList>
            <person name="Huttlin E.L."/>
            <person name="Jedrychowski M.P."/>
            <person name="Elias J.E."/>
            <person name="Goswami T."/>
            <person name="Rad R."/>
            <person name="Beausoleil S.A."/>
            <person name="Villen J."/>
            <person name="Haas W."/>
            <person name="Sowa M.E."/>
            <person name="Gygi S.P."/>
        </authorList>
    </citation>
    <scope>PHOSPHORYLATION [LARGE SCALE ANALYSIS] AT SER-108; SER-113; SER-121; SER-137; SER-141; SER-465; SER-466 AND SER-468</scope>
    <scope>IDENTIFICATION BY MASS SPECTROMETRY [LARGE SCALE ANALYSIS]</scope>
    <source>
        <tissue>Brain</tissue>
        <tissue>Brown adipose tissue</tissue>
        <tissue>Heart</tissue>
        <tissue>Kidney</tissue>
        <tissue>Lung</tissue>
        <tissue>Spleen</tissue>
        <tissue>Testis</tissue>
    </source>
</reference>
<reference key="7">
    <citation type="journal article" date="2012" name="EMBO J.">
        <title>A lysosome-to-nucleus signalling mechanism senses and regulates the lysosome via mTOR and TFEB.</title>
        <authorList>
            <person name="Settembre C."/>
            <person name="Zoncu R."/>
            <person name="Medina D.L."/>
            <person name="Vetrini F."/>
            <person name="Erdin S."/>
            <person name="Erdin S."/>
            <person name="Huynh T."/>
            <person name="Ferron M."/>
            <person name="Karsenty G."/>
            <person name="Vellard M.C."/>
            <person name="Facchinetti V."/>
            <person name="Sabatini D.M."/>
            <person name="Ballabio A."/>
        </authorList>
    </citation>
    <scope>FUNCTION</scope>
</reference>
<reference evidence="15" key="8">
    <citation type="journal article" date="2014" name="Immunity">
        <title>Innate host defense requires TFEB-mediated transcription of cytoprotective and antimicrobial genes.</title>
        <authorList>
            <person name="Visvikis O."/>
            <person name="Ihuegbu N."/>
            <person name="Labed S.A."/>
            <person name="Luhachack L.G."/>
            <person name="Alves A.M."/>
            <person name="Wollenberg A.C."/>
            <person name="Stuart L.M."/>
            <person name="Stormo G.D."/>
            <person name="Irazoqui J.E."/>
        </authorList>
    </citation>
    <scope>FUNCTION</scope>
</reference>
<reference key="9">
    <citation type="journal article" date="2016" name="Cell Rep.">
        <title>An evolutionarily conserved PLC-PKD-TFEB pathway for host defense.</title>
        <authorList>
            <person name="Najibi M."/>
            <person name="Labed S.A."/>
            <person name="Visvikis O."/>
            <person name="Irazoqui J.E."/>
        </authorList>
    </citation>
    <scope>FUNCTION</scope>
    <scope>SUBCELLULAR LOCATION</scope>
</reference>
<reference key="10">
    <citation type="journal article" date="2016" name="Nat. Commun.">
        <title>The Parkinson's disease-associated genes ATP13A2 and SYT11 regulate autophagy via a common pathway.</title>
        <authorList>
            <person name="Bento C.F."/>
            <person name="Ashkenazi A."/>
            <person name="Jimenez-Sanchez M."/>
            <person name="Rubinsztein D.C."/>
        </authorList>
    </citation>
    <scope>SUBCELLULAR LOCATION</scope>
    <scope>FUNCTION</scope>
</reference>
<reference key="11">
    <citation type="journal article" date="2017" name="Nat. Commun.">
        <title>TFEB regulates lysosomal positioning by modulating TMEM55B expression and JIP4 recruitment to lysosomes.</title>
        <authorList>
            <person name="Willett R."/>
            <person name="Martina J.A."/>
            <person name="Zewe J.P."/>
            <person name="Wills R."/>
            <person name="Hammond G.R.V."/>
            <person name="Puertollano R."/>
        </authorList>
    </citation>
    <scope>FUNCTION</scope>
</reference>
<reference key="12">
    <citation type="journal article" date="2020" name="Nature">
        <title>A substrate-specific mTORC1 pathway underlies Birt-Hogg-Dube syndrome.</title>
        <authorList>
            <person name="Napolitano G."/>
            <person name="Di Malta C."/>
            <person name="Esposito A."/>
            <person name="de Araujo M.E.G."/>
            <person name="Pece S."/>
            <person name="Bertalot G."/>
            <person name="Matarese M."/>
            <person name="Benedetti V."/>
            <person name="Zampelli A."/>
            <person name="Stasyk T."/>
            <person name="Siciliano D."/>
            <person name="Venuta A."/>
            <person name="Cesana M."/>
            <person name="Vilardo C."/>
            <person name="Nusco E."/>
            <person name="Monfregola J."/>
            <person name="Calcagni A."/>
            <person name="Di Fiore P.P."/>
            <person name="Huber L.A."/>
            <person name="Ballabio A."/>
        </authorList>
    </citation>
    <scope>SUBCELLULAR LOCATION</scope>
    <scope>DISRUPTION PHENOTYPE</scope>
</reference>
<reference key="13">
    <citation type="journal article" date="2022" name="Mol. Cell">
        <title>Itaconate is a lysosomal inducer that promotes antibacterial innate immunity.</title>
        <authorList>
            <person name="Zhang Z."/>
            <person name="Chen C."/>
            <person name="Yang F."/>
            <person name="Zeng Y.X."/>
            <person name="Sun P."/>
            <person name="Liu P."/>
            <person name="Li X."/>
        </authorList>
    </citation>
    <scope>FUNCTION</scope>
    <scope>ALKYLATION AT CYS-211</scope>
    <scope>MUTAGENESIS OF CYS-211</scope>
</reference>
<keyword id="KW-0010">Activator</keyword>
<keyword id="KW-1064">Adaptive immunity</keyword>
<keyword id="KW-0072">Autophagy</keyword>
<keyword id="KW-0963">Cytoplasm</keyword>
<keyword id="KW-0238">DNA-binding</keyword>
<keyword id="KW-0391">Immunity</keyword>
<keyword id="KW-0458">Lysosome</keyword>
<keyword id="KW-0472">Membrane</keyword>
<keyword id="KW-0539">Nucleus</keyword>
<keyword id="KW-0597">Phosphoprotein</keyword>
<keyword id="KW-1185">Reference proteome</keyword>
<keyword id="KW-0804">Transcription</keyword>
<keyword id="KW-0805">Transcription regulation</keyword>
<keyword id="KW-0832">Ubl conjugation</keyword>
<gene>
    <name evidence="14 16" type="primary">Tfeb</name>
    <name type="synonym">Tcfeb</name>
</gene>
<name>TFEB_MOUSE</name>
<accession>Q9R210</accession>
<comment type="function">
    <text evidence="1 5 6 7 8 9 10 12 13">Transcription factor that acts as a master regulator of lysosomal biogenesis, autophagy, lysosomal exocytosis, lipid catabolism, energy metabolism and immune response (PubMed:16936731, PubMed:22343943, PubMed:27278822, PubMed:35662396). Specifically recognizes and binds E-box sequences (5'-CANNTG-3'); efficient DNA-binding requires dimerization with itself or with another MiT/TFE family member such as TFE3 or MITF (PubMed:16936731, PubMed:27278822). Involved in the cellular response to amino acid availability by acting downstream of MTOR: in the presence of nutrients, TFEB phosphorylation by MTOR promotes its cytosolic retention and subsequent inactivation (PubMed:35662396). Upon starvation or lysosomal stress, inhibition of MTOR induces TFEB dephosphorylation, resulting in nuclear localization and transcription factor activity (By similarity). Specifically recognizes and binds the CLEAR-box sequence (5'-GTCACGTGAC-3') present in the regulatory region of many lysosomal genes, leading to activate their expression, thereby playing a central role in expression of lysosomal genes (By similarity). Regulates lysosomal positioning in response to nutrient deprivation by promoting the expression of PIP4P1 (PubMed:29146937). Acts as a positive regulator of autophagy by promoting expression of genes involved in autophagy (PubMed:27278822). In association with TFE3, activates the expression of CD40L in T-cells, thereby playing a role in T-cell-dependent antibody responses in activated CD4(+) T-cells and thymus-dependent humoral immunity (PubMed:16936731). Specifically recognizes the gamma-E3 box, a subset of E-boxes, present in the heavy-chain immunoglobulin enhancer (By similarity). Plays a role in the signal transduction processes required for normal vascularization of the placenta (PubMed:9806910). Involved in the immune response to infection by the bacteria S.aureus, S.typhimurium or S.enterica (PubMed:24882217, PubMed:27184844, PubMed:35662396). Infection promotes itaconate production, leading to alkylation, resulting in nuclear localization and transcription factor activity (PubMed:35662396). Itaconate-mediated alkylation activates TFEB-dependent lysosomal biogenesis, facilitating the bacteria clearance during the antibacterial innate immune response (PubMed:35662396). In association with ACSS2, promotes the expression of genes involved in lysosome biogenesis and both autophagy upon glucose deprivation (By similarity).</text>
</comment>
<comment type="subunit">
    <text evidence="1">Homodimer and heterodimer; with TFE3 or MITF (By similarity). Interacts (when phosphorylated by MTOR) with YWHAZ; promoting retention in the cytosol (By similarity). Interacts with Irgm1; promoting association between TFEB and PPP3CB and dephosphorylation (By similarity). Interacts with small GTPases Rag (RagA/RRAGA, RagB/RRAGB, RagC/RRAGC and/or RagD/RRAGD); promoting its recruitment to lysosomal membrane in the presence of nutrients (By similarity). Interacts with ACSS2 (By similarity).</text>
</comment>
<comment type="subcellular location">
    <subcellularLocation>
        <location evidence="9 11">Nucleus</location>
    </subcellularLocation>
    <subcellularLocation>
        <location evidence="1">Cytoplasm</location>
        <location evidence="1">Cytosol</location>
    </subcellularLocation>
    <subcellularLocation>
        <location evidence="1">Lysosome membrane</location>
    </subcellularLocation>
    <text evidence="1 9">Mainly present in the cytoplasm (By similarity). When nutrients are present, recruited to the lysosomal membrane via association with GDP-bound RagC/RRAGC (or RagD/RRAGD): it is then phosphorylated by MTOR (By similarity). Phosphorylation by MTOR prevents nuclear translocation and activity by promoting interaction with 14-3-3 proteins, such as YWHAZ (By similarity). Under aberrant lysosomal storage conditions, it translocates from the cytoplasm to the nucleus (By similarity). The translocation to the nucleus is regulated by ATP13A2 (PubMed:27278822). Conversely, inhibition of mTORC1, starvation and lysosomal disruption, promotes dephosphorylation and translocation to the nucleus (By similarity). Exported from the nucleus in response to nutrient availability (By similarity). In macrophages, translocates into the nucleus upon live S.enterica infection (By similarity).</text>
</comment>
<comment type="tissue specificity">
    <text evidence="5">Widely expressed.</text>
</comment>
<comment type="developmental stage">
    <text evidence="13">Expressed at low levels in the embryo but at high levels in the labyrinthine trophoblast cells of the placenta.</text>
</comment>
<comment type="domain">
    <text evidence="1">The leucine zipper region is essential for homo- or heterodimerization and high-affinity DNA binding. DNA binding is mediated by the basic region.</text>
</comment>
<comment type="PTM">
    <text evidence="1">Phosphorylation at Ser-210 by MTOR via non-canonical mTORC1 pathway regulates its subcellular location and activity (By similarity). When nutrients are present, phosphorylation by MTOR promotes association with 14-3-3/YWHA adapters and retention in the cytosol (By similarity). Inhibition of mTORC1, starvation and lysosomal disruption, promotes dephosphorylation by calcineurin PPP3CB and translocation to the nucleus (By similarity). Dephosphorylated by calcineurin PPP3CB in response to lysosomal Ca(2+) release (By similarity). Irgm1 promotes dephosphorylation by calcineurin PPP3CB, resulting in TFEB nuclear translocation and stimulation of lysosomal biogenesis (By similarity). Exported from the nucleus in a mTORC1-dependent manner in response to nutrient availability (By similarity).</text>
</comment>
<comment type="PTM">
    <text evidence="12">Alkylated via a non-enzymatic covalent modification (PubMed:35662396). Itaconate, an anti-inflammatory metabolite generated in response to lipopolysaccharide, alkylates Cys-211, preventing association with 14-3-3/YWHA adapters, thereby promoting nuclear translocation and activity (PubMed:35662396).</text>
</comment>
<comment type="PTM">
    <text evidence="1">Sumoylated; does not affect dimerization with MITF.</text>
</comment>
<comment type="disruption phenotype">
    <text evidence="11 13">Death between 9.5 and 10.5 days in embryonic development (PubMed:9806910). Embryos display severe defects in placental vascularization (PubMed:9806910). The embryonic vasculature forms normally but few vessels are seen entering the placenta and those that do enter fail to thrive and branch normally (PubMed:9806910). Conditional deletion in kidney does not lead to any abnormality in the kidney (PubMed:32612235). Mice lacking Tfeb and Flcn in the kidney do not show any abnormality in the kidney, suggesting that the kidney phenotype observed in Flcn knockout mice is due to constitutive activation of Tfeb (PubMed:32612235).</text>
</comment>
<comment type="similarity">
    <text evidence="15">Belongs to the MiT/TFE family.</text>
</comment>
<comment type="sequence caution" evidence="15">
    <conflict type="erroneous initiation">
        <sequence resource="EMBL-CDS" id="AAD20979"/>
    </conflict>
    <text>Extended N-terminus.</text>
</comment>
<proteinExistence type="evidence at protein level"/>